<evidence type="ECO:0000250" key="1"/>
<evidence type="ECO:0000256" key="2">
    <source>
        <dbReference type="SAM" id="MobiDB-lite"/>
    </source>
</evidence>
<evidence type="ECO:0000269" key="3">
    <source>
    </source>
</evidence>
<evidence type="ECO:0000305" key="4"/>
<reference key="1">
    <citation type="journal article" date="1992" name="Z. Naturforsch. C">
        <title>Characterization of plastid 5-aminolevulinate dehydratase (ALAD; EC 4.2.1.24) from spinach (Spinacia oleracea L.) by sequencing and comparison with non-plant ALAD enzymes.</title>
        <authorList>
            <person name="Schaumburg A."/>
            <person name="Schneider-Poetsch H.A.W."/>
            <person name="Eckerskorn C."/>
        </authorList>
    </citation>
    <scope>NUCLEOTIDE SEQUENCE [MRNA]</scope>
    <scope>PROTEIN SEQUENCE OF 57-70</scope>
    <source>
        <strain>cv. Aestivato</strain>
    </source>
</reference>
<name>HEM2_SPIOL</name>
<organism>
    <name type="scientific">Spinacia oleracea</name>
    <name type="common">Spinach</name>
    <dbReference type="NCBI Taxonomy" id="3562"/>
    <lineage>
        <taxon>Eukaryota</taxon>
        <taxon>Viridiplantae</taxon>
        <taxon>Streptophyta</taxon>
        <taxon>Embryophyta</taxon>
        <taxon>Tracheophyta</taxon>
        <taxon>Spermatophyta</taxon>
        <taxon>Magnoliopsida</taxon>
        <taxon>eudicotyledons</taxon>
        <taxon>Gunneridae</taxon>
        <taxon>Pentapetalae</taxon>
        <taxon>Caryophyllales</taxon>
        <taxon>Chenopodiaceae</taxon>
        <taxon>Chenopodioideae</taxon>
        <taxon>Anserineae</taxon>
        <taxon>Spinacia</taxon>
    </lineage>
</organism>
<keyword id="KW-0021">Allosteric enzyme</keyword>
<keyword id="KW-0149">Chlorophyll biosynthesis</keyword>
<keyword id="KW-0150">Chloroplast</keyword>
<keyword id="KW-0903">Direct protein sequencing</keyword>
<keyword id="KW-0350">Heme biosynthesis</keyword>
<keyword id="KW-0456">Lyase</keyword>
<keyword id="KW-0460">Magnesium</keyword>
<keyword id="KW-0479">Metal-binding</keyword>
<keyword id="KW-0934">Plastid</keyword>
<keyword id="KW-0627">Porphyrin biosynthesis</keyword>
<keyword id="KW-1185">Reference proteome</keyword>
<keyword id="KW-0809">Transit peptide</keyword>
<comment type="function">
    <text evidence="1">Catalyzes an early step in the biosynthesis of tetrapyrroles. Binds two molecules of 5-aminolevulinate per subunit, each at a distinct site, and catalyzes their condensation to form porphobilinogen (By similarity).</text>
</comment>
<comment type="catalytic activity">
    <reaction>
        <text>2 5-aminolevulinate = porphobilinogen + 2 H2O + H(+)</text>
        <dbReference type="Rhea" id="RHEA:24064"/>
        <dbReference type="ChEBI" id="CHEBI:15377"/>
        <dbReference type="ChEBI" id="CHEBI:15378"/>
        <dbReference type="ChEBI" id="CHEBI:58126"/>
        <dbReference type="ChEBI" id="CHEBI:356416"/>
        <dbReference type="EC" id="4.2.1.24"/>
    </reaction>
</comment>
<comment type="cofactor">
    <cofactor evidence="1">
        <name>Mg(2+)</name>
        <dbReference type="ChEBI" id="CHEBI:18420"/>
    </cofactor>
    <text evidence="1">Binds 2 magnesium ions per monomer. The first magnesium ion is required for catalysis. The second functions as allosteric activator.</text>
</comment>
<comment type="pathway">
    <text>Porphyrin-containing compound metabolism; protoporphyrin-IX biosynthesis; coproporphyrinogen-III from 5-aminolevulinate: step 1/4.</text>
</comment>
<comment type="subunit">
    <text evidence="1">Homooctamer.</text>
</comment>
<comment type="subcellular location">
    <subcellularLocation>
        <location>Plastid</location>
        <location>Chloroplast</location>
    </subcellularLocation>
</comment>
<comment type="similarity">
    <text evidence="4">Belongs to the ALAD family.</text>
</comment>
<feature type="transit peptide" description="Chloroplast" evidence="3">
    <location>
        <begin position="1"/>
        <end position="56"/>
    </location>
</feature>
<feature type="chain" id="PRO_0000013321" description="Delta-aminolevulinic acid dehydratase, chloroplastic">
    <location>
        <begin position="57"/>
        <end position="433"/>
    </location>
</feature>
<feature type="region of interest" description="Disordered" evidence="2">
    <location>
        <begin position="83"/>
        <end position="115"/>
    </location>
</feature>
<feature type="compositionally biased region" description="Pro residues" evidence="2">
    <location>
        <begin position="86"/>
        <end position="95"/>
    </location>
</feature>
<feature type="active site" description="Schiff-base intermediate with substrate" evidence="1">
    <location>
        <position position="301"/>
    </location>
</feature>
<feature type="active site" description="Schiff-base intermediate with substrate" evidence="1">
    <location>
        <position position="354"/>
    </location>
</feature>
<feature type="binding site" evidence="1">
    <location>
        <position position="311"/>
    </location>
    <ligand>
        <name>5-aminolevulinate</name>
        <dbReference type="ChEBI" id="CHEBI:356416"/>
        <label>1</label>
    </ligand>
</feature>
<feature type="binding site" evidence="1">
    <location>
        <position position="323"/>
    </location>
    <ligand>
        <name>5-aminolevulinate</name>
        <dbReference type="ChEBI" id="CHEBI:356416"/>
        <label>1</label>
    </ligand>
</feature>
<feature type="binding site" evidence="1">
    <location>
        <position position="339"/>
    </location>
    <ligand>
        <name>Mg(2+)</name>
        <dbReference type="ChEBI" id="CHEBI:18420"/>
    </ligand>
</feature>
<feature type="binding site" evidence="1">
    <location>
        <position position="380"/>
    </location>
    <ligand>
        <name>5-aminolevulinate</name>
        <dbReference type="ChEBI" id="CHEBI:356416"/>
        <label>2</label>
    </ligand>
</feature>
<feature type="binding site" evidence="1">
    <location>
        <position position="419"/>
    </location>
    <ligand>
        <name>5-aminolevulinate</name>
        <dbReference type="ChEBI" id="CHEBI:356416"/>
        <label>2</label>
    </ligand>
</feature>
<sequence length="433" mass="47322">MASTFNIPCNAGTIKNFNNSQRNLGFSSNLGINFAKTRFSNCGDSGRIPSQLVVRASERRDNLTQQKTGLSIEECEAAVVAGNAPSAPPVPPTPKAPSGTPSVSPLSLGRRPRRNRTSPVFRAAFQETTLSPANVVYPLFIHEGEEDTPIGAMPGCYRLGWRHGLVEEVAKARDVVVNSIVVFPKPDALKSPTGDEAYNENGLVPRTIRMLKDKFPDLIIYTDVALDPYYYDGHDGIVTQHGVIMNDETVHQLCKQAVAQARAGADVVSPSDMMDGRVGAIRAALDAEGYSNVSIMSYTAKYASSFYGPFREALDSNPRFGDKKTYQMNPANYREALIETQEDESEGADILLVKPGLPYLDIIRLLRDNSDLPIAAYQVSGEYSMIKAGGVLKMIDEEKVMLESLLCLRRAGADIILTYFALQAARCLCGEKR</sequence>
<accession>P24493</accession>
<gene>
    <name type="primary">HEMB</name>
    <name type="synonym">ALA1</name>
</gene>
<proteinExistence type="evidence at protein level"/>
<protein>
    <recommendedName>
        <fullName>Delta-aminolevulinic acid dehydratase, chloroplastic</fullName>
        <shortName>ALAD</shortName>
        <shortName>ALADH</shortName>
        <ecNumber>4.2.1.24</ecNumber>
    </recommendedName>
    <alternativeName>
        <fullName>Porphobilinogen synthase</fullName>
    </alternativeName>
</protein>
<dbReference type="EC" id="4.2.1.24"/>
<dbReference type="EMBL" id="X57842">
    <property type="protein sequence ID" value="CAA40974.1"/>
    <property type="molecule type" value="mRNA"/>
</dbReference>
<dbReference type="PIR" id="A50000">
    <property type="entry name" value="A50000"/>
</dbReference>
<dbReference type="SMR" id="P24493"/>
<dbReference type="UniPathway" id="UPA00251">
    <property type="reaction ID" value="UER00318"/>
</dbReference>
<dbReference type="Proteomes" id="UP001155700">
    <property type="component" value="Unplaced"/>
</dbReference>
<dbReference type="GO" id="GO:0009507">
    <property type="term" value="C:chloroplast"/>
    <property type="evidence" value="ECO:0007669"/>
    <property type="project" value="UniProtKB-SubCell"/>
</dbReference>
<dbReference type="GO" id="GO:0005829">
    <property type="term" value="C:cytosol"/>
    <property type="evidence" value="ECO:0000318"/>
    <property type="project" value="GO_Central"/>
</dbReference>
<dbReference type="GO" id="GO:0004655">
    <property type="term" value="F:porphobilinogen synthase activity"/>
    <property type="evidence" value="ECO:0000318"/>
    <property type="project" value="GO_Central"/>
</dbReference>
<dbReference type="GO" id="GO:0008270">
    <property type="term" value="F:zinc ion binding"/>
    <property type="evidence" value="ECO:0000318"/>
    <property type="project" value="GO_Central"/>
</dbReference>
<dbReference type="GO" id="GO:0015995">
    <property type="term" value="P:chlorophyll biosynthetic process"/>
    <property type="evidence" value="ECO:0007669"/>
    <property type="project" value="UniProtKB-KW"/>
</dbReference>
<dbReference type="GO" id="GO:0006783">
    <property type="term" value="P:heme biosynthetic process"/>
    <property type="evidence" value="ECO:0000318"/>
    <property type="project" value="GO_Central"/>
</dbReference>
<dbReference type="GO" id="GO:0006782">
    <property type="term" value="P:protoporphyrinogen IX biosynthetic process"/>
    <property type="evidence" value="ECO:0007669"/>
    <property type="project" value="UniProtKB-UniPathway"/>
</dbReference>
<dbReference type="CDD" id="cd04823">
    <property type="entry name" value="ALAD_PBGS_aspartate_rich"/>
    <property type="match status" value="1"/>
</dbReference>
<dbReference type="FunFam" id="3.20.20.70:FF:000101">
    <property type="entry name" value="Delta-aminolevulinic acid dehydratase"/>
    <property type="match status" value="1"/>
</dbReference>
<dbReference type="Gene3D" id="3.20.20.70">
    <property type="entry name" value="Aldolase class I"/>
    <property type="match status" value="1"/>
</dbReference>
<dbReference type="InterPro" id="IPR001731">
    <property type="entry name" value="ALAD"/>
</dbReference>
<dbReference type="InterPro" id="IPR030656">
    <property type="entry name" value="ALAD_AS"/>
</dbReference>
<dbReference type="InterPro" id="IPR013785">
    <property type="entry name" value="Aldolase_TIM"/>
</dbReference>
<dbReference type="NCBIfam" id="NF006762">
    <property type="entry name" value="PRK09283.1"/>
    <property type="match status" value="1"/>
</dbReference>
<dbReference type="PANTHER" id="PTHR11458">
    <property type="entry name" value="DELTA-AMINOLEVULINIC ACID DEHYDRATASE"/>
    <property type="match status" value="1"/>
</dbReference>
<dbReference type="PANTHER" id="PTHR11458:SF0">
    <property type="entry name" value="DELTA-AMINOLEVULINIC ACID DEHYDRATASE"/>
    <property type="match status" value="1"/>
</dbReference>
<dbReference type="Pfam" id="PF00490">
    <property type="entry name" value="ALAD"/>
    <property type="match status" value="1"/>
</dbReference>
<dbReference type="PRINTS" id="PR00144">
    <property type="entry name" value="DALDHYDRTASE"/>
</dbReference>
<dbReference type="SMART" id="SM01004">
    <property type="entry name" value="ALAD"/>
    <property type="match status" value="1"/>
</dbReference>
<dbReference type="SUPFAM" id="SSF51569">
    <property type="entry name" value="Aldolase"/>
    <property type="match status" value="1"/>
</dbReference>
<dbReference type="PROSITE" id="PS00169">
    <property type="entry name" value="D_ALA_DEHYDRATASE"/>
    <property type="match status" value="1"/>
</dbReference>